<proteinExistence type="inferred from homology"/>
<comment type="catalytic activity">
    <reaction evidence="1">
        <text>tRNA(Lys) + L-lysine + ATP = L-lysyl-tRNA(Lys) + AMP + diphosphate</text>
        <dbReference type="Rhea" id="RHEA:20792"/>
        <dbReference type="Rhea" id="RHEA-COMP:9696"/>
        <dbReference type="Rhea" id="RHEA-COMP:9697"/>
        <dbReference type="ChEBI" id="CHEBI:30616"/>
        <dbReference type="ChEBI" id="CHEBI:32551"/>
        <dbReference type="ChEBI" id="CHEBI:33019"/>
        <dbReference type="ChEBI" id="CHEBI:78442"/>
        <dbReference type="ChEBI" id="CHEBI:78529"/>
        <dbReference type="ChEBI" id="CHEBI:456215"/>
        <dbReference type="EC" id="6.1.1.6"/>
    </reaction>
</comment>
<comment type="cofactor">
    <cofactor evidence="1">
        <name>Mg(2+)</name>
        <dbReference type="ChEBI" id="CHEBI:18420"/>
    </cofactor>
    <text evidence="1">Binds 3 Mg(2+) ions per subunit.</text>
</comment>
<comment type="subunit">
    <text evidence="1">Homodimer.</text>
</comment>
<comment type="subcellular location">
    <subcellularLocation>
        <location evidence="1">Cytoplasm</location>
    </subcellularLocation>
</comment>
<comment type="similarity">
    <text evidence="1">Belongs to the class-II aminoacyl-tRNA synthetase family.</text>
</comment>
<accession>Q6GJF4</accession>
<keyword id="KW-0030">Aminoacyl-tRNA synthetase</keyword>
<keyword id="KW-0067">ATP-binding</keyword>
<keyword id="KW-0963">Cytoplasm</keyword>
<keyword id="KW-0436">Ligase</keyword>
<keyword id="KW-0460">Magnesium</keyword>
<keyword id="KW-0479">Metal-binding</keyword>
<keyword id="KW-0547">Nucleotide-binding</keyword>
<keyword id="KW-0648">Protein biosynthesis</keyword>
<feature type="chain" id="PRO_0000152678" description="Lysine--tRNA ligase">
    <location>
        <begin position="1"/>
        <end position="495"/>
    </location>
</feature>
<feature type="binding site" evidence="1">
    <location>
        <position position="406"/>
    </location>
    <ligand>
        <name>Mg(2+)</name>
        <dbReference type="ChEBI" id="CHEBI:18420"/>
        <label>1</label>
    </ligand>
</feature>
<feature type="binding site" evidence="1">
    <location>
        <position position="413"/>
    </location>
    <ligand>
        <name>Mg(2+)</name>
        <dbReference type="ChEBI" id="CHEBI:18420"/>
        <label>1</label>
    </ligand>
</feature>
<feature type="binding site" evidence="1">
    <location>
        <position position="413"/>
    </location>
    <ligand>
        <name>Mg(2+)</name>
        <dbReference type="ChEBI" id="CHEBI:18420"/>
        <label>2</label>
    </ligand>
</feature>
<protein>
    <recommendedName>
        <fullName evidence="1">Lysine--tRNA ligase</fullName>
        <ecNumber evidence="1">6.1.1.6</ecNumber>
    </recommendedName>
    <alternativeName>
        <fullName evidence="1">Lysyl-tRNA synthetase</fullName>
        <shortName evidence="1">LysRS</shortName>
    </alternativeName>
</protein>
<reference key="1">
    <citation type="journal article" date="2004" name="Proc. Natl. Acad. Sci. U.S.A.">
        <title>Complete genomes of two clinical Staphylococcus aureus strains: evidence for the rapid evolution of virulence and drug resistance.</title>
        <authorList>
            <person name="Holden M.T.G."/>
            <person name="Feil E.J."/>
            <person name="Lindsay J.A."/>
            <person name="Peacock S.J."/>
            <person name="Day N.P.J."/>
            <person name="Enright M.C."/>
            <person name="Foster T.J."/>
            <person name="Moore C.E."/>
            <person name="Hurst L."/>
            <person name="Atkin R."/>
            <person name="Barron A."/>
            <person name="Bason N."/>
            <person name="Bentley S.D."/>
            <person name="Chillingworth C."/>
            <person name="Chillingworth T."/>
            <person name="Churcher C."/>
            <person name="Clark L."/>
            <person name="Corton C."/>
            <person name="Cronin A."/>
            <person name="Doggett J."/>
            <person name="Dowd L."/>
            <person name="Feltwell T."/>
            <person name="Hance Z."/>
            <person name="Harris B."/>
            <person name="Hauser H."/>
            <person name="Holroyd S."/>
            <person name="Jagels K."/>
            <person name="James K.D."/>
            <person name="Lennard N."/>
            <person name="Line A."/>
            <person name="Mayes R."/>
            <person name="Moule S."/>
            <person name="Mungall K."/>
            <person name="Ormond D."/>
            <person name="Quail M.A."/>
            <person name="Rabbinowitsch E."/>
            <person name="Rutherford K.M."/>
            <person name="Sanders M."/>
            <person name="Sharp S."/>
            <person name="Simmonds M."/>
            <person name="Stevens K."/>
            <person name="Whitehead S."/>
            <person name="Barrell B.G."/>
            <person name="Spratt B.G."/>
            <person name="Parkhill J."/>
        </authorList>
    </citation>
    <scope>NUCLEOTIDE SEQUENCE [LARGE SCALE GENOMIC DNA]</scope>
    <source>
        <strain>MRSA252</strain>
    </source>
</reference>
<sequence>MSEEMNDQMLVRRQKLQELYDLGIDPFGSKFDRSGLSSDLKEEWDQYSKEELVEKEADSHVAIAGRLMTKRGKGKAGFAHVQDLAGQIQIYVRKDQVGDDEFDLWKNADLGDIVGVEGVMFKTNTGELSVKAKKFTLLTKSLRPLPDKFHGLQDIEQRYRQRYLDLITNEDSTRTFINRSKIIQEMRNYLNNKGFLEVETPMMHQIAGGAAARPFVTHHNALDATLYMRIAIELHLKRLIVGGLEKVYEIGRVFRNEGVSTRHNPEFTMIELYEAYADYHDIMDLTESMVRHIANEVLGSAKVQYNGETIDLESAWTRLHIVDAVKEATGVDFYEVKSDEEAKALAKEHGIEIKDTMKYGHILNEFFEQKVEETLIQPTFIYGHPTEISPLAKKNPEDPRFTDRFELFIVGREHANAFTELNDPIDQKGRFEAQLAEKAQGNDEAHEMDEDYIEALEYGMPPTGGLGIGIDRLVMLLTDSPSIRDVLLFPYMRQK</sequence>
<gene>
    <name evidence="1" type="primary">lysS</name>
    <name type="ordered locus">SAR0518</name>
</gene>
<dbReference type="EC" id="6.1.1.6" evidence="1"/>
<dbReference type="EMBL" id="BX571856">
    <property type="protein sequence ID" value="CAG39540.1"/>
    <property type="molecule type" value="Genomic_DNA"/>
</dbReference>
<dbReference type="RefSeq" id="WP_001288201.1">
    <property type="nucleotide sequence ID" value="NC_002952.2"/>
</dbReference>
<dbReference type="SMR" id="Q6GJF4"/>
<dbReference type="KEGG" id="sar:SAR0518"/>
<dbReference type="HOGENOM" id="CLU_008255_6_0_9"/>
<dbReference type="Proteomes" id="UP000000596">
    <property type="component" value="Chromosome"/>
</dbReference>
<dbReference type="GO" id="GO:0005829">
    <property type="term" value="C:cytosol"/>
    <property type="evidence" value="ECO:0007669"/>
    <property type="project" value="TreeGrafter"/>
</dbReference>
<dbReference type="GO" id="GO:0005524">
    <property type="term" value="F:ATP binding"/>
    <property type="evidence" value="ECO:0007669"/>
    <property type="project" value="UniProtKB-UniRule"/>
</dbReference>
<dbReference type="GO" id="GO:0140096">
    <property type="term" value="F:catalytic activity, acting on a protein"/>
    <property type="evidence" value="ECO:0007669"/>
    <property type="project" value="UniProtKB-ARBA"/>
</dbReference>
<dbReference type="GO" id="GO:0004824">
    <property type="term" value="F:lysine-tRNA ligase activity"/>
    <property type="evidence" value="ECO:0007669"/>
    <property type="project" value="UniProtKB-UniRule"/>
</dbReference>
<dbReference type="GO" id="GO:0000287">
    <property type="term" value="F:magnesium ion binding"/>
    <property type="evidence" value="ECO:0007669"/>
    <property type="project" value="UniProtKB-UniRule"/>
</dbReference>
<dbReference type="GO" id="GO:0016740">
    <property type="term" value="F:transferase activity"/>
    <property type="evidence" value="ECO:0007669"/>
    <property type="project" value="UniProtKB-ARBA"/>
</dbReference>
<dbReference type="GO" id="GO:0000049">
    <property type="term" value="F:tRNA binding"/>
    <property type="evidence" value="ECO:0007669"/>
    <property type="project" value="TreeGrafter"/>
</dbReference>
<dbReference type="GO" id="GO:0006430">
    <property type="term" value="P:lysyl-tRNA aminoacylation"/>
    <property type="evidence" value="ECO:0007669"/>
    <property type="project" value="UniProtKB-UniRule"/>
</dbReference>
<dbReference type="CDD" id="cd00775">
    <property type="entry name" value="LysRS_core"/>
    <property type="match status" value="1"/>
</dbReference>
<dbReference type="CDD" id="cd04322">
    <property type="entry name" value="LysRS_N"/>
    <property type="match status" value="1"/>
</dbReference>
<dbReference type="FunFam" id="2.40.50.140:FF:000024">
    <property type="entry name" value="Lysine--tRNA ligase"/>
    <property type="match status" value="1"/>
</dbReference>
<dbReference type="FunFam" id="3.30.930.10:FF:000001">
    <property type="entry name" value="Lysine--tRNA ligase"/>
    <property type="match status" value="1"/>
</dbReference>
<dbReference type="Gene3D" id="3.30.930.10">
    <property type="entry name" value="Bira Bifunctional Protein, Domain 2"/>
    <property type="match status" value="1"/>
</dbReference>
<dbReference type="Gene3D" id="2.40.50.140">
    <property type="entry name" value="Nucleic acid-binding proteins"/>
    <property type="match status" value="1"/>
</dbReference>
<dbReference type="HAMAP" id="MF_00252">
    <property type="entry name" value="Lys_tRNA_synth_class2"/>
    <property type="match status" value="1"/>
</dbReference>
<dbReference type="InterPro" id="IPR004364">
    <property type="entry name" value="Aa-tRNA-synt_II"/>
</dbReference>
<dbReference type="InterPro" id="IPR006195">
    <property type="entry name" value="aa-tRNA-synth_II"/>
</dbReference>
<dbReference type="InterPro" id="IPR045864">
    <property type="entry name" value="aa-tRNA-synth_II/BPL/LPL"/>
</dbReference>
<dbReference type="InterPro" id="IPR002313">
    <property type="entry name" value="Lys-tRNA-ligase_II"/>
</dbReference>
<dbReference type="InterPro" id="IPR034762">
    <property type="entry name" value="Lys-tRNA-ligase_II_bac/euk"/>
</dbReference>
<dbReference type="InterPro" id="IPR044136">
    <property type="entry name" value="Lys-tRNA-ligase_II_N"/>
</dbReference>
<dbReference type="InterPro" id="IPR018149">
    <property type="entry name" value="Lys-tRNA-synth_II_C"/>
</dbReference>
<dbReference type="InterPro" id="IPR012340">
    <property type="entry name" value="NA-bd_OB-fold"/>
</dbReference>
<dbReference type="InterPro" id="IPR004365">
    <property type="entry name" value="NA-bd_OB_tRNA"/>
</dbReference>
<dbReference type="NCBIfam" id="TIGR00499">
    <property type="entry name" value="lysS_bact"/>
    <property type="match status" value="1"/>
</dbReference>
<dbReference type="NCBIfam" id="NF001756">
    <property type="entry name" value="PRK00484.1"/>
    <property type="match status" value="1"/>
</dbReference>
<dbReference type="PANTHER" id="PTHR42918:SF15">
    <property type="entry name" value="LYSINE--TRNA LIGASE, CHLOROPLASTIC_MITOCHONDRIAL"/>
    <property type="match status" value="1"/>
</dbReference>
<dbReference type="PANTHER" id="PTHR42918">
    <property type="entry name" value="LYSYL-TRNA SYNTHETASE"/>
    <property type="match status" value="1"/>
</dbReference>
<dbReference type="Pfam" id="PF00152">
    <property type="entry name" value="tRNA-synt_2"/>
    <property type="match status" value="1"/>
</dbReference>
<dbReference type="Pfam" id="PF01336">
    <property type="entry name" value="tRNA_anti-codon"/>
    <property type="match status" value="1"/>
</dbReference>
<dbReference type="PIRSF" id="PIRSF039101">
    <property type="entry name" value="LysRS2"/>
    <property type="match status" value="1"/>
</dbReference>
<dbReference type="PRINTS" id="PR00982">
    <property type="entry name" value="TRNASYNTHLYS"/>
</dbReference>
<dbReference type="SUPFAM" id="SSF55681">
    <property type="entry name" value="Class II aaRS and biotin synthetases"/>
    <property type="match status" value="1"/>
</dbReference>
<dbReference type="SUPFAM" id="SSF50249">
    <property type="entry name" value="Nucleic acid-binding proteins"/>
    <property type="match status" value="1"/>
</dbReference>
<dbReference type="PROSITE" id="PS50862">
    <property type="entry name" value="AA_TRNA_LIGASE_II"/>
    <property type="match status" value="1"/>
</dbReference>
<evidence type="ECO:0000255" key="1">
    <source>
        <dbReference type="HAMAP-Rule" id="MF_00252"/>
    </source>
</evidence>
<name>SYK_STAAR</name>
<organism>
    <name type="scientific">Staphylococcus aureus (strain MRSA252)</name>
    <dbReference type="NCBI Taxonomy" id="282458"/>
    <lineage>
        <taxon>Bacteria</taxon>
        <taxon>Bacillati</taxon>
        <taxon>Bacillota</taxon>
        <taxon>Bacilli</taxon>
        <taxon>Bacillales</taxon>
        <taxon>Staphylococcaceae</taxon>
        <taxon>Staphylococcus</taxon>
    </lineage>
</organism>